<reference evidence="16" key="1">
    <citation type="submission" date="2017-01" db="EMBL/GenBank/DDBJ databases">
        <authorList>
            <person name="Mah S.A."/>
            <person name="Swanson W.J."/>
            <person name="Moy G.W."/>
            <person name="Vacquier V.D."/>
        </authorList>
    </citation>
    <scope>NUCLEOTIDE SEQUENCE [MRNA]</scope>
    <source>
        <strain evidence="16">cv. M82</strain>
    </source>
</reference>
<reference key="2">
    <citation type="journal article" date="2012" name="Nature">
        <title>The tomato genome sequence provides insights into fleshy fruit evolution.</title>
        <authorList>
            <consortium name="Tomato Genome Consortium"/>
        </authorList>
    </citation>
    <scope>NUCLEOTIDE SEQUENCE [LARGE SCALE GENOMIC DNA]</scope>
    <source>
        <strain>cv. Heinz 1706</strain>
    </source>
</reference>
<reference key="3">
    <citation type="journal article" date="2011" name="Plant Cell Rep.">
        <title>Identification, isolation and expression analysis of auxin response factor (ARF) genes in Solanum lycopersicum.</title>
        <authorList>
            <person name="Wu J."/>
            <person name="Wang F."/>
            <person name="Cheng L."/>
            <person name="Kong F."/>
            <person name="Peng Z."/>
            <person name="Liu S."/>
            <person name="Yu X."/>
            <person name="Lu G."/>
        </authorList>
    </citation>
    <scope>TISSUE SPECIFICITY</scope>
    <scope>DEVELOPMENTAL STAGE</scope>
    <scope>PHYLOGENETIC ANALYSIS</scope>
</reference>
<reference key="4">
    <citation type="journal article" date="2015" name="PLoS Genet.">
        <title>Auxin response factor SlARF2 is an essential component of the regulatory mechanism controlling fruit ripening in tomato.</title>
        <authorList>
            <person name="Hao Y."/>
            <person name="Hu G."/>
            <person name="Breitel D."/>
            <person name="Liu M."/>
            <person name="Mila I."/>
            <person name="Frasse P."/>
            <person name="Fu Y."/>
            <person name="Aharoni A."/>
            <person name="Bouzayen M."/>
            <person name="Zouine M."/>
        </authorList>
    </citation>
    <scope>FUNCTION</scope>
    <scope>SUBCELLULAR LOCATION</scope>
    <scope>TISSUE SPECIFICITY</scope>
    <scope>INDUCTION</scope>
    <scope>DISRUPTION PHENOTYPE</scope>
</reference>
<reference key="5">
    <citation type="journal article" date="2016" name="PLoS Genet.">
        <title>AUXIN RESPONSE FACTOR 2 intersects hormonal signals in the regulation of tomato fruit ripening.</title>
        <authorList>
            <person name="Breitel D.A."/>
            <person name="Chappell-Maor L."/>
            <person name="Meir S."/>
            <person name="Panizel I."/>
            <person name="Puig C.P."/>
            <person name="Hao Y."/>
            <person name="Yifhar T."/>
            <person name="Yasuor H."/>
            <person name="Zouine M."/>
            <person name="Bouzayen M."/>
            <person name="Granell Richart A."/>
            <person name="Rogachev I."/>
            <person name="Aharoni A."/>
        </authorList>
    </citation>
    <scope>FUNCTION</scope>
    <scope>SUBUNIT</scope>
    <scope>INTERACTION WITH ASR1</scope>
    <scope>SUBCELLULAR LOCATION</scope>
    <scope>DEVELOPMENTAL STAGE</scope>
    <scope>INDUCTION</scope>
    <scope>DISRUPTION PHENOTYPE</scope>
</reference>
<reference key="6">
    <citation type="journal article" date="2016" name="Sci. Rep.">
        <title>SlARF2a plays a negative role in mediating axillary shoot formation.</title>
        <authorList>
            <person name="Xu T."/>
            <person name="Liu X."/>
            <person name="Wang R."/>
            <person name="Dong X."/>
            <person name="Guan X."/>
            <person name="Wang Y."/>
            <person name="Jiang Y."/>
            <person name="Shi Z."/>
            <person name="Qi M."/>
            <person name="Li T."/>
        </authorList>
    </citation>
    <scope>FUNCTION</scope>
    <scope>TISSUE SPECIFICITY</scope>
    <scope>DEVELOPMENTAL STAGE</scope>
    <scope>INDUCTION</scope>
    <scope>DISRUPTION PHENOTYPE</scope>
</reference>
<reference key="7">
    <citation type="journal article" date="2017" name="Plant Sci.">
        <title>The Solanum lycopersicum auxin response factor SlARF2 participates in regulating lateral root formation and flower organ senescence.</title>
        <authorList>
            <person name="Ren Z."/>
            <person name="Liu R."/>
            <person name="Gu W."/>
            <person name="Dong X."/>
        </authorList>
    </citation>
    <scope>FUNCTION</scope>
    <scope>TISSUE SPECIFICITY</scope>
    <scope>DEVELOPMENTAL STAGE</scope>
    <scope>INDUCTION</scope>
    <scope>PHYLOGENETIC ANALYSIS</scope>
</reference>
<proteinExistence type="evidence at protein level"/>
<evidence type="ECO:0000255" key="1"/>
<evidence type="ECO:0000255" key="2">
    <source>
        <dbReference type="PROSITE-ProRule" id="PRU00326"/>
    </source>
</evidence>
<evidence type="ECO:0000255" key="3">
    <source>
        <dbReference type="PROSITE-ProRule" id="PRU01081"/>
    </source>
</evidence>
<evidence type="ECO:0000255" key="4">
    <source>
        <dbReference type="RuleBase" id="RU004561"/>
    </source>
</evidence>
<evidence type="ECO:0000256" key="5">
    <source>
        <dbReference type="SAM" id="MobiDB-lite"/>
    </source>
</evidence>
<evidence type="ECO:0000269" key="6">
    <source>
    </source>
</evidence>
<evidence type="ECO:0000269" key="7">
    <source>
    </source>
</evidence>
<evidence type="ECO:0000269" key="8">
    <source>
    </source>
</evidence>
<evidence type="ECO:0000269" key="9">
    <source>
    </source>
</evidence>
<evidence type="ECO:0000269" key="10">
    <source>
    </source>
</evidence>
<evidence type="ECO:0000303" key="11">
    <source>
    </source>
</evidence>
<evidence type="ECO:0000303" key="12">
    <source>
    </source>
</evidence>
<evidence type="ECO:0000303" key="13">
    <source>
    </source>
</evidence>
<evidence type="ECO:0000305" key="14"/>
<evidence type="ECO:0000305" key="15">
    <source>
    </source>
</evidence>
<evidence type="ECO:0000312" key="16">
    <source>
        <dbReference type="EMBL" id="ABC69711.1"/>
    </source>
</evidence>
<protein>
    <recommendedName>
        <fullName evidence="12 13">Auxin response factor 2A</fullName>
        <shortName evidence="12">SlARF2A</shortName>
    </recommendedName>
</protein>
<keyword id="KW-0927">Auxin signaling pathway</keyword>
<keyword id="KW-0217">Developmental protein</keyword>
<keyword id="KW-0238">DNA-binding</keyword>
<keyword id="KW-0292">Fruit ripening</keyword>
<keyword id="KW-0539">Nucleus</keyword>
<keyword id="KW-1185">Reference proteome</keyword>
<keyword id="KW-0804">Transcription</keyword>
<keyword id="KW-0805">Transcription regulation</keyword>
<comment type="function">
    <text evidence="4 7 8 9 10">Auxin response factors (ARFs) are transcriptional factors that bind specifically to the DNA sequence 5'-TGTCTC-3' found in the auxin-responsive promoter elements (AuxREs) (By similarity). Could act as transcriptional activator or repressor (PubMed:26716451, PubMed:26959229, PubMed:27645097, PubMed:28167023). Involved in the control of fruit ripening process (PubMed:26716451, PubMed:26959229, PubMed:28167023). Regulates expression of a number of ripening regulators, transcription factors, and ethylene biosynthesis and signaling components (PubMed:26716451, PubMed:26959229). May act as a transcriptional repressor of auxin-responsive genes (PubMed:26716451). Regulates vegetative growth, lateral root formation and flower organ senescence, possibly partially by regulating gene expression of auxin and ethylene response factor (ERF) genes (PubMed:28167023). Plays a negative role in axillary shoot meristem formation (PubMed:27645097).</text>
</comment>
<comment type="subunit">
    <text evidence="8">Homodimers and heterodimers. Interacts with ASR1.</text>
</comment>
<comment type="subcellular location">
    <subcellularLocation>
        <location evidence="1 2 4 7 8">Nucleus</location>
    </subcellularLocation>
</comment>
<comment type="tissue specificity">
    <text evidence="6 7 9 10">Expressed in root, leaf and flower (PubMed:21735233, PubMed:26716451, PubMed:27645097, PubMed:28167023). Expressed in flower buds about three days before opening including ovary, petal and sepal with the highest in stamen (PubMed:21735233). Expressed in stem (PubMed:21735233, PubMed:26716451, PubMed:28167023). Expressed in fruit (PubMed:26716451, PubMed:27645097, PubMed:28167023). Expressed in seeds (PubMed:27645097).</text>
</comment>
<comment type="developmental stage">
    <text evidence="6 8 9 10">Expression increases at the orange (Or) and red (R) fruit stages. Expression is increased with ethylene at mature green (MG) stage, but only after six days post-treatment. Expression is increased three days post-treatment with plant hormone abscisic acid (ABA) at the Or stage, but not at the MG or breaker (Br) stages. No change in expression level up to six days post-treatment with ABA at the MG fruit stage (PubMed:26959229). Expressed during floral development (PubMed:21735233, PubMed:27645097, PubMed:28167023). During bud-anthesis stages flowers exhibit dynamic expression pattern in sepal, stamen, ovary and petal (PubMed:28167023). Expressed during ovary development with the highest expression on the third day after the flower fully opened (PubMed:21735233). During seed germination, expressed in the cotyledon. Expressed strongly in the pollen grain. Expressed in the developing fruits, in which mainly expressed in the vascular tissues and seeds. During growth, strongly expressed in leaf, where mainly expressed in the trichome and in the root tip and lateral root formation sites. Expressed in the vascular tissue and the epicycle of the root. Also expressed in branch (PubMed:27645097).</text>
</comment>
<comment type="induction">
    <text evidence="7 8 9 10">By tomato fruit ripening. Expression in tomato fruits is up-regulated by exogenous application of ethylene and down-regulated by inhibition of ethylene receptors with 1-methylcyclopropene (1-MCP) (PubMed:26716451, PubMed:26959229). Up-regulated by plant hormone abscisic acid (ABA) in tomato fruits (PubMed:26959229). Expression is not up-regulated by plant hormone auxin in tomato fruits (PubMed:26716451). Up-regulated by auxin and gibberellic acid (GA), and down-regulated by ethylene in seedlings (PubMed:28167023). Down-regulated during decapitation-induced axillary shoot development and by excision of immature leaves. Down-regulation is inhibited by the application of auxin on the cut surface (PubMed:27645097).</text>
</comment>
<comment type="disruption phenotype">
    <text evidence="7 8 9">Simultaneous RNAi-mediated silencing of both ARF2A and ARF2B results in severe defects in tomato fruit ripening process (PubMed:26716451, PubMed:26959229). Plants form triple cotyledons and have enhanced root branching. Tomatoes have reduced pigment accumulation, enhanced fruit firmness, low climacteric ethylene production and inability to ripen upon exogenous application of ethylene (PubMed:26716451). The fruits are either parthenocarpic or contain only a few seeds, and the time from anthesis to breaker (Br) developmental stage is significantly extended compared to wild type fruit (PubMed:26959229). Altered expression of ethylene biosynthesis, signaling and ethylene response factor (ERF) genes and genes involved in the carotenoid pathway and ripening-related cell wall metabolism. Up-regulates auxin-responsive genes (PubMed:26716451). Down-regulated expression levels of ripening regulators, including RIN, AP2a, NOR, TAGL1, ETR3, ERF1 and CNR at the red (R) fruit stage. Expression levels of hormones such as abscisates, cytokinins and salicyclic acid are altered, and levels of carotenoids phytoene, phytofluene and lycopene are reduced in red fruits. Gibberellic acid (GA) and auxin expression levels are unchanged. Compounds normally reduced upon ripening show higher levels than wild type fruit as a result of simultaneous silencing of ARF2A and ARF2B (PubMed:26959229). RNAi-mediated silencing of ARF2A results in increased frequency of polycotyledons and significantly increased lateral organ development. Lateral shoot emergence occurs at the first leaf node compared to eighth leaf node in wild type. An unusual meristem appears in the mature leaf and lateral shoot development appears below the position of the cotyledon nodes. Unusual lateral branches also appear in the stem, which is located far from the leaf node. Epiderm is split along the axis at the site of the unusual meristem. Abnormally enlarged interfascicular cambia and phloem. Altered auxin distribution, and expression of auxin transporter PIN genes and ectopic axillary shoot-related transcriptional factors (PubMed:27645097).</text>
</comment>
<comment type="similarity">
    <text evidence="4 14">Belongs to the ARF family.</text>
</comment>
<gene>
    <name evidence="12 13" type="primary">ARF2A</name>
    <name evidence="11 16" type="synonym">ARF2</name>
    <name evidence="15" type="ordered locus">Solyc03g118290</name>
</gene>
<organism evidence="16">
    <name type="scientific">Solanum lycopersicum</name>
    <name type="common">Tomato</name>
    <name type="synonym">Lycopersicon esculentum</name>
    <dbReference type="NCBI Taxonomy" id="4081"/>
    <lineage>
        <taxon>Eukaryota</taxon>
        <taxon>Viridiplantae</taxon>
        <taxon>Streptophyta</taxon>
        <taxon>Embryophyta</taxon>
        <taxon>Tracheophyta</taxon>
        <taxon>Spermatophyta</taxon>
        <taxon>Magnoliopsida</taxon>
        <taxon>eudicotyledons</taxon>
        <taxon>Gunneridae</taxon>
        <taxon>Pentapetalae</taxon>
        <taxon>asterids</taxon>
        <taxon>lamiids</taxon>
        <taxon>Solanales</taxon>
        <taxon>Solanaceae</taxon>
        <taxon>Solanoideae</taxon>
        <taxon>Solaneae</taxon>
        <taxon>Solanum</taxon>
        <taxon>Solanum subgen. Lycopersicon</taxon>
    </lineage>
</organism>
<accession>Q2LAJ3</accession>
<name>ARF2A_SOLLC</name>
<sequence>MAASEVSIQGYSEPSDGSRPVSETGRSSSGVGIVDADTALYTELWRSCAGPLVTVPREGELVYYFPQGHIEQVEASTNQVADQQMPLYNLPSKILCRVVNVLLKAEPDTDEVYAQVTLMPEPNQDENAVKKEPMRPPPPRFHVHSFCKTLTASDTSTHGGFSVLRRHADECLPQLDMSRQPPTQELVAKDLHGNEWRFRHIFRGQPRRHLLQSGWSVFVSSKRLVAGDAFIFLRGENGELRVGVRRAMRQQGNAPSSVISSHSMHLGVLATAWHAIQTKTMFTVYYKPRTSPAEFIVPYDHYMESVKNNYSIGMRFKMRFEGEEAPEQRFTGTIVGIEDADPQRWLESKWRCLKVRWDENSSIPRPDRVSPWKIEPALSPPALNVPPVARPKRPRSSILPTSPDSSVLTREGSSRATADHSQASGFPRVLQGQELSTFRGGFAEINETDLSEKPMIWQTSVNDEKNDIHSASKRYLPDKWLPLGRPESSLTDLLSGFGSSHGFCLPSADQAAFGARLVKQQTQDQEKDFSLLGKPWSLLSSGLSLNLMDSGSKAPGIGGDTPYQMRGDARYSGYGEFSVLPGHRVANQQGSWIMPQPVSPYMQLSSHSREMMHKPSVVKQPEAVKPKEGNYKLFGIPLTSNVCTDAVMMRKSSLIDPASDMNIGIHPHQSLATDSDQRSEQSKGSKVDDGVAANDHDKQFHTFHLAARDKDGKGHSSSTRSCTKVHKQGTALGRSVDLAKFNNYDELIAELDQLFDFNGELKARSKSWLVVYTDDEGDMMLVGDDPWQEFCGMVRKIFIYTKEEVQRMNPGTLNSKGEDTSSVAEGSDAKEVKNLQLPSESGQAES</sequence>
<dbReference type="EMBL" id="DQ340255">
    <property type="protein sequence ID" value="ABC69711.1"/>
    <property type="molecule type" value="mRNA"/>
</dbReference>
<dbReference type="EMBL" id="CM001066">
    <property type="status" value="NOT_ANNOTATED_CDS"/>
    <property type="molecule type" value="Genomic_DNA"/>
</dbReference>
<dbReference type="RefSeq" id="NP_001233765.1">
    <property type="nucleotide sequence ID" value="NM_001246836.2"/>
</dbReference>
<dbReference type="SMR" id="Q2LAJ3"/>
<dbReference type="FunCoup" id="Q2LAJ3">
    <property type="interactions" value="2229"/>
</dbReference>
<dbReference type="STRING" id="4081.Q2LAJ3"/>
<dbReference type="PaxDb" id="4081-Solyc03g118290.2.1"/>
<dbReference type="EnsemblPlants" id="Solyc03g118290.3.1">
    <property type="protein sequence ID" value="Solyc03g118290.3.1"/>
    <property type="gene ID" value="Solyc03g118290.3"/>
</dbReference>
<dbReference type="GeneID" id="778240"/>
<dbReference type="Gramene" id="Solyc03g118290.3.1">
    <property type="protein sequence ID" value="Solyc03g118290.3.1"/>
    <property type="gene ID" value="Solyc03g118290.3"/>
</dbReference>
<dbReference type="KEGG" id="sly:778240"/>
<dbReference type="eggNOG" id="ENOG502QRXI">
    <property type="taxonomic scope" value="Eukaryota"/>
</dbReference>
<dbReference type="HOGENOM" id="CLU_002626_2_2_1"/>
<dbReference type="InParanoid" id="Q2LAJ3"/>
<dbReference type="OMA" id="LHFWNGQ"/>
<dbReference type="OrthoDB" id="1912783at2759"/>
<dbReference type="PhylomeDB" id="Q2LAJ3"/>
<dbReference type="Proteomes" id="UP000004994">
    <property type="component" value="Chromosome 3"/>
</dbReference>
<dbReference type="ExpressionAtlas" id="Q2LAJ3">
    <property type="expression patterns" value="baseline and differential"/>
</dbReference>
<dbReference type="GO" id="GO:0005634">
    <property type="term" value="C:nucleus"/>
    <property type="evidence" value="ECO:0007669"/>
    <property type="project" value="UniProtKB-SubCell"/>
</dbReference>
<dbReference type="GO" id="GO:0003677">
    <property type="term" value="F:DNA binding"/>
    <property type="evidence" value="ECO:0007669"/>
    <property type="project" value="UniProtKB-KW"/>
</dbReference>
<dbReference type="GO" id="GO:0046982">
    <property type="term" value="F:protein heterodimerization activity"/>
    <property type="evidence" value="ECO:0000353"/>
    <property type="project" value="UniProtKB"/>
</dbReference>
<dbReference type="GO" id="GO:0042803">
    <property type="term" value="F:protein homodimerization activity"/>
    <property type="evidence" value="ECO:0000353"/>
    <property type="project" value="UniProtKB"/>
</dbReference>
<dbReference type="GO" id="GO:0009734">
    <property type="term" value="P:auxin-activated signaling pathway"/>
    <property type="evidence" value="ECO:0007669"/>
    <property type="project" value="UniProtKB-KW"/>
</dbReference>
<dbReference type="GO" id="GO:0009835">
    <property type="term" value="P:fruit ripening"/>
    <property type="evidence" value="ECO:0000270"/>
    <property type="project" value="UniProtKB"/>
</dbReference>
<dbReference type="GO" id="GO:0009836">
    <property type="term" value="P:fruit ripening, climacteric"/>
    <property type="evidence" value="ECO:0000315"/>
    <property type="project" value="UniProtKB"/>
</dbReference>
<dbReference type="GO" id="GO:0009911">
    <property type="term" value="P:positive regulation of flower development"/>
    <property type="evidence" value="ECO:0000270"/>
    <property type="project" value="UniProtKB"/>
</dbReference>
<dbReference type="GO" id="GO:0006355">
    <property type="term" value="P:regulation of DNA-templated transcription"/>
    <property type="evidence" value="ECO:0007669"/>
    <property type="project" value="InterPro"/>
</dbReference>
<dbReference type="CDD" id="cd10017">
    <property type="entry name" value="B3_DNA"/>
    <property type="match status" value="1"/>
</dbReference>
<dbReference type="FunFam" id="2.30.30.1040:FF:000001">
    <property type="entry name" value="Auxin response factor"/>
    <property type="match status" value="1"/>
</dbReference>
<dbReference type="FunFam" id="2.40.330.10:FF:000001">
    <property type="entry name" value="Auxin response factor"/>
    <property type="match status" value="1"/>
</dbReference>
<dbReference type="FunFam" id="3.10.20.90:FF:000047">
    <property type="entry name" value="Auxin response factor"/>
    <property type="match status" value="1"/>
</dbReference>
<dbReference type="Gene3D" id="2.30.30.1040">
    <property type="match status" value="1"/>
</dbReference>
<dbReference type="Gene3D" id="2.40.330.10">
    <property type="entry name" value="DNA-binding pseudobarrel domain"/>
    <property type="match status" value="1"/>
</dbReference>
<dbReference type="Gene3D" id="3.10.20.90">
    <property type="entry name" value="Phosphatidylinositol 3-kinase Catalytic Subunit, Chain A, domain 1"/>
    <property type="match status" value="1"/>
</dbReference>
<dbReference type="InterPro" id="IPR010525">
    <property type="entry name" value="ARF_dom"/>
</dbReference>
<dbReference type="InterPro" id="IPR044835">
    <property type="entry name" value="ARF_plant"/>
</dbReference>
<dbReference type="InterPro" id="IPR033389">
    <property type="entry name" value="AUX/IAA_dom"/>
</dbReference>
<dbReference type="InterPro" id="IPR003340">
    <property type="entry name" value="B3_DNA-bd"/>
</dbReference>
<dbReference type="InterPro" id="IPR015300">
    <property type="entry name" value="DNA-bd_pseudobarrel_sf"/>
</dbReference>
<dbReference type="InterPro" id="IPR053793">
    <property type="entry name" value="PB1-like"/>
</dbReference>
<dbReference type="PANTHER" id="PTHR31384:SF144">
    <property type="entry name" value="AUXIN RESPONSE FACTOR 2A"/>
    <property type="match status" value="1"/>
</dbReference>
<dbReference type="PANTHER" id="PTHR31384">
    <property type="entry name" value="AUXIN RESPONSE FACTOR 4-RELATED"/>
    <property type="match status" value="1"/>
</dbReference>
<dbReference type="Pfam" id="PF06507">
    <property type="entry name" value="ARF_AD"/>
    <property type="match status" value="1"/>
</dbReference>
<dbReference type="Pfam" id="PF02309">
    <property type="entry name" value="AUX_IAA"/>
    <property type="match status" value="1"/>
</dbReference>
<dbReference type="Pfam" id="PF02362">
    <property type="entry name" value="B3"/>
    <property type="match status" value="1"/>
</dbReference>
<dbReference type="SMART" id="SM01019">
    <property type="entry name" value="B3"/>
    <property type="match status" value="1"/>
</dbReference>
<dbReference type="SUPFAM" id="SSF54277">
    <property type="entry name" value="CAD &amp; PB1 domains"/>
    <property type="match status" value="1"/>
</dbReference>
<dbReference type="SUPFAM" id="SSF101936">
    <property type="entry name" value="DNA-binding pseudobarrel domain"/>
    <property type="match status" value="1"/>
</dbReference>
<dbReference type="PROSITE" id="PS50863">
    <property type="entry name" value="B3"/>
    <property type="match status" value="1"/>
</dbReference>
<dbReference type="PROSITE" id="PS51745">
    <property type="entry name" value="PB1"/>
    <property type="match status" value="1"/>
</dbReference>
<feature type="chain" id="PRO_0000441018" description="Auxin response factor 2A">
    <location>
        <begin position="1"/>
        <end position="846"/>
    </location>
</feature>
<feature type="domain" description="PB1" evidence="3">
    <location>
        <begin position="720"/>
        <end position="804"/>
    </location>
</feature>
<feature type="DNA-binding region" description="TF-B3" evidence="2">
    <location>
        <begin position="146"/>
        <end position="248"/>
    </location>
</feature>
<feature type="region of interest" description="Disordered" evidence="5">
    <location>
        <begin position="1"/>
        <end position="30"/>
    </location>
</feature>
<feature type="region of interest" description="Disordered" evidence="5">
    <location>
        <begin position="380"/>
        <end position="423"/>
    </location>
</feature>
<feature type="region of interest" description="Disordered" evidence="5">
    <location>
        <begin position="660"/>
        <end position="693"/>
    </location>
</feature>
<feature type="region of interest" description="Disordered" evidence="5">
    <location>
        <begin position="809"/>
        <end position="846"/>
    </location>
</feature>
<feature type="compositionally biased region" description="Polar residues" evidence="5">
    <location>
        <begin position="1"/>
        <end position="12"/>
    </location>
</feature>
<feature type="compositionally biased region" description="Polar residues" evidence="5">
    <location>
        <begin position="398"/>
        <end position="408"/>
    </location>
</feature>
<feature type="compositionally biased region" description="Polar residues" evidence="5">
    <location>
        <begin position="414"/>
        <end position="423"/>
    </location>
</feature>
<feature type="compositionally biased region" description="Basic and acidic residues" evidence="5">
    <location>
        <begin position="675"/>
        <end position="693"/>
    </location>
</feature>
<feature type="compositionally biased region" description="Polar residues" evidence="5">
    <location>
        <begin position="809"/>
        <end position="824"/>
    </location>
</feature>
<feature type="compositionally biased region" description="Polar residues" evidence="5">
    <location>
        <begin position="836"/>
        <end position="846"/>
    </location>
</feature>